<keyword id="KW-0119">Carbohydrate metabolism</keyword>
<keyword id="KW-0170">Cobalt</keyword>
<keyword id="KW-0408">Iron</keyword>
<keyword id="KW-0413">Isomerase</keyword>
<keyword id="KW-0464">Manganese</keyword>
<keyword id="KW-0479">Metal-binding</keyword>
<keyword id="KW-1185">Reference proteome</keyword>
<keyword id="KW-0862">Zinc</keyword>
<sequence>MVKPIIAPSILASDFANLECGCHRVINAGAEWLHIDVMDGHFVPNITLGPPIVKSLRKAVPRVGDKESDKPKAFFDCHMMVAEPEKWVDVFVENGADQFTFHYEATKNPLELVKLIKSRGIRAACAIKPDTPVDVLFELAPYLDMALVMTVEPGFGGQKFMPDMMPKVAALREKFPQLDIQVDGGLGKETIPHAAKAGANVIVAGTSVFAAADQKDVISYMKDNVRDELRSRGLLDIDM</sequence>
<dbReference type="EC" id="5.1.3.1" evidence="2"/>
<dbReference type="EMBL" id="AE016819">
    <property type="protein sequence ID" value="AAS53166.1"/>
    <property type="molecule type" value="Genomic_DNA"/>
</dbReference>
<dbReference type="RefSeq" id="NP_985342.1">
    <property type="nucleotide sequence ID" value="NM_210696.1"/>
</dbReference>
<dbReference type="SMR" id="Q755M2"/>
<dbReference type="FunCoup" id="Q755M2">
    <property type="interactions" value="470"/>
</dbReference>
<dbReference type="STRING" id="284811.Q755M2"/>
<dbReference type="EnsemblFungi" id="AAS53166">
    <property type="protein sequence ID" value="AAS53166"/>
    <property type="gene ID" value="AGOS_AFL208C"/>
</dbReference>
<dbReference type="GeneID" id="4621566"/>
<dbReference type="KEGG" id="ago:AGOS_AFL208C"/>
<dbReference type="eggNOG" id="KOG3111">
    <property type="taxonomic scope" value="Eukaryota"/>
</dbReference>
<dbReference type="HOGENOM" id="CLU_054856_0_1_1"/>
<dbReference type="InParanoid" id="Q755M2"/>
<dbReference type="OMA" id="CHLMIED"/>
<dbReference type="OrthoDB" id="1927044at2759"/>
<dbReference type="UniPathway" id="UPA00115">
    <property type="reaction ID" value="UER00411"/>
</dbReference>
<dbReference type="Proteomes" id="UP000000591">
    <property type="component" value="Chromosome VI"/>
</dbReference>
<dbReference type="GO" id="GO:0005829">
    <property type="term" value="C:cytosol"/>
    <property type="evidence" value="ECO:0000318"/>
    <property type="project" value="GO_Central"/>
</dbReference>
<dbReference type="GO" id="GO:0004750">
    <property type="term" value="F:D-ribulose-phosphate 3-epimerase activity"/>
    <property type="evidence" value="ECO:0000318"/>
    <property type="project" value="GO_Central"/>
</dbReference>
<dbReference type="GO" id="GO:0046872">
    <property type="term" value="F:metal ion binding"/>
    <property type="evidence" value="ECO:0000318"/>
    <property type="project" value="GO_Central"/>
</dbReference>
<dbReference type="GO" id="GO:0005975">
    <property type="term" value="P:carbohydrate metabolic process"/>
    <property type="evidence" value="ECO:0000318"/>
    <property type="project" value="GO_Central"/>
</dbReference>
<dbReference type="GO" id="GO:0009052">
    <property type="term" value="P:pentose-phosphate shunt, non-oxidative branch"/>
    <property type="evidence" value="ECO:0000318"/>
    <property type="project" value="GO_Central"/>
</dbReference>
<dbReference type="CDD" id="cd00429">
    <property type="entry name" value="RPE"/>
    <property type="match status" value="1"/>
</dbReference>
<dbReference type="FunFam" id="3.20.20.70:FF:000074">
    <property type="entry name" value="Ribulose-phosphate 3-epimerase"/>
    <property type="match status" value="1"/>
</dbReference>
<dbReference type="Gene3D" id="3.20.20.70">
    <property type="entry name" value="Aldolase class I"/>
    <property type="match status" value="1"/>
</dbReference>
<dbReference type="HAMAP" id="MF_02227">
    <property type="entry name" value="RPE"/>
    <property type="match status" value="1"/>
</dbReference>
<dbReference type="InterPro" id="IPR013785">
    <property type="entry name" value="Aldolase_TIM"/>
</dbReference>
<dbReference type="InterPro" id="IPR026019">
    <property type="entry name" value="Ribul_P_3_epim"/>
</dbReference>
<dbReference type="InterPro" id="IPR000056">
    <property type="entry name" value="Ribul_P_3_epim-like"/>
</dbReference>
<dbReference type="InterPro" id="IPR011060">
    <property type="entry name" value="RibuloseP-bd_barrel"/>
</dbReference>
<dbReference type="NCBIfam" id="NF004076">
    <property type="entry name" value="PRK05581.1-4"/>
    <property type="match status" value="1"/>
</dbReference>
<dbReference type="NCBIfam" id="TIGR01163">
    <property type="entry name" value="rpe"/>
    <property type="match status" value="1"/>
</dbReference>
<dbReference type="PANTHER" id="PTHR11749">
    <property type="entry name" value="RIBULOSE-5-PHOSPHATE-3-EPIMERASE"/>
    <property type="match status" value="1"/>
</dbReference>
<dbReference type="Pfam" id="PF00834">
    <property type="entry name" value="Ribul_P_3_epim"/>
    <property type="match status" value="1"/>
</dbReference>
<dbReference type="PIRSF" id="PIRSF001461">
    <property type="entry name" value="RPE"/>
    <property type="match status" value="1"/>
</dbReference>
<dbReference type="SUPFAM" id="SSF51366">
    <property type="entry name" value="Ribulose-phoshate binding barrel"/>
    <property type="match status" value="1"/>
</dbReference>
<dbReference type="PROSITE" id="PS01085">
    <property type="entry name" value="RIBUL_P_3_EPIMER_1"/>
    <property type="match status" value="1"/>
</dbReference>
<dbReference type="PROSITE" id="PS01086">
    <property type="entry name" value="RIBUL_P_3_EPIMER_2"/>
    <property type="match status" value="1"/>
</dbReference>
<accession>Q755M2</accession>
<gene>
    <name type="primary">RPE1</name>
    <name type="ordered locus">AFL208C</name>
</gene>
<comment type="function">
    <text evidence="2">Catalyzes the reversible epimerization of D-ribulose 5-phosphate to D-xylulose 5-phosphate.</text>
</comment>
<comment type="catalytic activity">
    <reaction evidence="2">
        <text>D-ribulose 5-phosphate = D-xylulose 5-phosphate</text>
        <dbReference type="Rhea" id="RHEA:13677"/>
        <dbReference type="ChEBI" id="CHEBI:57737"/>
        <dbReference type="ChEBI" id="CHEBI:58121"/>
        <dbReference type="EC" id="5.1.3.1"/>
    </reaction>
</comment>
<comment type="cofactor">
    <cofactor evidence="2">
        <name>Co(2+)</name>
        <dbReference type="ChEBI" id="CHEBI:48828"/>
    </cofactor>
    <cofactor evidence="2">
        <name>Fe(2+)</name>
        <dbReference type="ChEBI" id="CHEBI:29033"/>
    </cofactor>
    <cofactor evidence="2">
        <name>Mn(2+)</name>
        <dbReference type="ChEBI" id="CHEBI:29035"/>
    </cofactor>
    <cofactor evidence="2">
        <name>Zn(2+)</name>
        <dbReference type="ChEBI" id="CHEBI:29105"/>
    </cofactor>
    <text evidence="2">Binds 1 divalent metal cation per subunit. Active with Co(2+), Fe(2+), Mn(2+) and Zn(2+).</text>
</comment>
<comment type="pathway">
    <text>Carbohydrate degradation; pentose phosphate pathway; D-xylulose 5-phosphate from D-ribulose 5-phosphate (non-oxidative stage): step 1/1.</text>
</comment>
<comment type="similarity">
    <text evidence="3">Belongs to the ribulose-phosphate 3-epimerase family.</text>
</comment>
<reference key="1">
    <citation type="journal article" date="2004" name="Science">
        <title>The Ashbya gossypii genome as a tool for mapping the ancient Saccharomyces cerevisiae genome.</title>
        <authorList>
            <person name="Dietrich F.S."/>
            <person name="Voegeli S."/>
            <person name="Brachat S."/>
            <person name="Lerch A."/>
            <person name="Gates K."/>
            <person name="Steiner S."/>
            <person name="Mohr C."/>
            <person name="Poehlmann R."/>
            <person name="Luedi P."/>
            <person name="Choi S."/>
            <person name="Wing R.A."/>
            <person name="Flavier A."/>
            <person name="Gaffney T.D."/>
            <person name="Philippsen P."/>
        </authorList>
    </citation>
    <scope>NUCLEOTIDE SEQUENCE [LARGE SCALE GENOMIC DNA]</scope>
    <source>
        <strain>ATCC 10895 / CBS 109.51 / FGSC 9923 / NRRL Y-1056</strain>
    </source>
</reference>
<reference key="2">
    <citation type="journal article" date="2013" name="G3 (Bethesda)">
        <title>Genomes of Ashbya fungi isolated from insects reveal four mating-type loci, numerous translocations, lack of transposons, and distinct gene duplications.</title>
        <authorList>
            <person name="Dietrich F.S."/>
            <person name="Voegeli S."/>
            <person name="Kuo S."/>
            <person name="Philippsen P."/>
        </authorList>
    </citation>
    <scope>GENOME REANNOTATION</scope>
    <source>
        <strain>ATCC 10895 / CBS 109.51 / FGSC 9923 / NRRL Y-1056</strain>
    </source>
</reference>
<name>RPE_EREGS</name>
<organism>
    <name type="scientific">Eremothecium gossypii (strain ATCC 10895 / CBS 109.51 / FGSC 9923 / NRRL Y-1056)</name>
    <name type="common">Yeast</name>
    <name type="synonym">Ashbya gossypii</name>
    <dbReference type="NCBI Taxonomy" id="284811"/>
    <lineage>
        <taxon>Eukaryota</taxon>
        <taxon>Fungi</taxon>
        <taxon>Dikarya</taxon>
        <taxon>Ascomycota</taxon>
        <taxon>Saccharomycotina</taxon>
        <taxon>Saccharomycetes</taxon>
        <taxon>Saccharomycetales</taxon>
        <taxon>Saccharomycetaceae</taxon>
        <taxon>Eremothecium</taxon>
    </lineage>
</organism>
<proteinExistence type="inferred from homology"/>
<feature type="chain" id="PRO_0000171591" description="Ribulose-phosphate 3-epimerase">
    <location>
        <begin position="1"/>
        <end position="239"/>
    </location>
</feature>
<feature type="active site" description="Proton acceptor" evidence="1">
    <location>
        <position position="36"/>
    </location>
</feature>
<feature type="active site" description="Proton donor" evidence="1">
    <location>
        <position position="183"/>
    </location>
</feature>
<feature type="binding site" evidence="1">
    <location>
        <position position="9"/>
    </location>
    <ligand>
        <name>substrate</name>
    </ligand>
</feature>
<feature type="binding site" evidence="1">
    <location>
        <position position="34"/>
    </location>
    <ligand>
        <name>a divalent metal cation</name>
        <dbReference type="ChEBI" id="CHEBI:60240"/>
    </ligand>
</feature>
<feature type="binding site" evidence="1">
    <location>
        <position position="36"/>
    </location>
    <ligand>
        <name>a divalent metal cation</name>
        <dbReference type="ChEBI" id="CHEBI:60240"/>
    </ligand>
</feature>
<feature type="binding site" evidence="1">
    <location>
        <position position="78"/>
    </location>
    <ligand>
        <name>a divalent metal cation</name>
        <dbReference type="ChEBI" id="CHEBI:60240"/>
    </ligand>
</feature>
<feature type="binding site" evidence="1">
    <location>
        <position position="78"/>
    </location>
    <ligand>
        <name>substrate</name>
    </ligand>
</feature>
<feature type="binding site" evidence="1">
    <location>
        <begin position="154"/>
        <end position="157"/>
    </location>
    <ligand>
        <name>substrate</name>
    </ligand>
</feature>
<feature type="binding site" evidence="1">
    <location>
        <begin position="183"/>
        <end position="185"/>
    </location>
    <ligand>
        <name>substrate</name>
    </ligand>
</feature>
<feature type="binding site" evidence="1">
    <location>
        <position position="183"/>
    </location>
    <ligand>
        <name>a divalent metal cation</name>
        <dbReference type="ChEBI" id="CHEBI:60240"/>
    </ligand>
</feature>
<feature type="binding site" evidence="1">
    <location>
        <begin position="205"/>
        <end position="207"/>
    </location>
    <ligand>
        <name>substrate</name>
    </ligand>
</feature>
<evidence type="ECO:0000250" key="1">
    <source>
        <dbReference type="UniProtKB" id="P32719"/>
    </source>
</evidence>
<evidence type="ECO:0000250" key="2">
    <source>
        <dbReference type="UniProtKB" id="Q96AT9"/>
    </source>
</evidence>
<evidence type="ECO:0000305" key="3"/>
<protein>
    <recommendedName>
        <fullName>Ribulose-phosphate 3-epimerase</fullName>
        <ecNumber evidence="2">5.1.3.1</ecNumber>
    </recommendedName>
    <alternativeName>
        <fullName>Pentose-5-phosphate 3-epimerase</fullName>
        <shortName>PPE</shortName>
    </alternativeName>
    <alternativeName>
        <fullName>RPE</fullName>
    </alternativeName>
</protein>